<sequence length="231" mass="25455">MKRAVVVFSGGQDSTTCLAQARHQYDEVHCVTFDYGQRHRAEIDVARALALKLGARAHKVLDVTLLNELAVSSLTRDSIPVPDYEPNADGIPNTFVPGRNILFLTLAAIYAYQVKAEAVITGVCETDFSGYPDCRDEFVKALNHAVNLGMAKDIRFETPLMWIDKAETWALADYWGQLDLVREETLTCYNGIKGDGCGHCAACNLRANGLNHYLSNKAAVMAAMKQKTGLR</sequence>
<organism>
    <name type="scientific">Salmonella dublin (strain CT_02021853)</name>
    <dbReference type="NCBI Taxonomy" id="439851"/>
    <lineage>
        <taxon>Bacteria</taxon>
        <taxon>Pseudomonadati</taxon>
        <taxon>Pseudomonadota</taxon>
        <taxon>Gammaproteobacteria</taxon>
        <taxon>Enterobacterales</taxon>
        <taxon>Enterobacteriaceae</taxon>
        <taxon>Salmonella</taxon>
    </lineage>
</organism>
<reference key="1">
    <citation type="journal article" date="2011" name="J. Bacteriol.">
        <title>Comparative genomics of 28 Salmonella enterica isolates: evidence for CRISPR-mediated adaptive sublineage evolution.</title>
        <authorList>
            <person name="Fricke W.F."/>
            <person name="Mammel M.K."/>
            <person name="McDermott P.F."/>
            <person name="Tartera C."/>
            <person name="White D.G."/>
            <person name="Leclerc J.E."/>
            <person name="Ravel J."/>
            <person name="Cebula T.A."/>
        </authorList>
    </citation>
    <scope>NUCLEOTIDE SEQUENCE [LARGE SCALE GENOMIC DNA]</scope>
    <source>
        <strain>CT_02021853</strain>
    </source>
</reference>
<feature type="chain" id="PRO_1000186628" description="7-cyano-7-deazaguanine synthase">
    <location>
        <begin position="1"/>
        <end position="231"/>
    </location>
</feature>
<feature type="binding site" evidence="1">
    <location>
        <begin position="8"/>
        <end position="18"/>
    </location>
    <ligand>
        <name>ATP</name>
        <dbReference type="ChEBI" id="CHEBI:30616"/>
    </ligand>
</feature>
<feature type="binding site" evidence="1">
    <location>
        <position position="188"/>
    </location>
    <ligand>
        <name>Zn(2+)</name>
        <dbReference type="ChEBI" id="CHEBI:29105"/>
    </ligand>
</feature>
<feature type="binding site" evidence="1">
    <location>
        <position position="197"/>
    </location>
    <ligand>
        <name>Zn(2+)</name>
        <dbReference type="ChEBI" id="CHEBI:29105"/>
    </ligand>
</feature>
<feature type="binding site" evidence="1">
    <location>
        <position position="200"/>
    </location>
    <ligand>
        <name>Zn(2+)</name>
        <dbReference type="ChEBI" id="CHEBI:29105"/>
    </ligand>
</feature>
<feature type="binding site" evidence="1">
    <location>
        <position position="203"/>
    </location>
    <ligand>
        <name>Zn(2+)</name>
        <dbReference type="ChEBI" id="CHEBI:29105"/>
    </ligand>
</feature>
<evidence type="ECO:0000255" key="1">
    <source>
        <dbReference type="HAMAP-Rule" id="MF_01633"/>
    </source>
</evidence>
<name>QUEC_SALDC</name>
<proteinExistence type="inferred from homology"/>
<protein>
    <recommendedName>
        <fullName evidence="1">7-cyano-7-deazaguanine synthase</fullName>
        <ecNumber evidence="1">6.3.4.20</ecNumber>
    </recommendedName>
    <alternativeName>
        <fullName evidence="1">7-cyano-7-carbaguanine synthase</fullName>
    </alternativeName>
    <alternativeName>
        <fullName evidence="1">PreQ(0) synthase</fullName>
    </alternativeName>
    <alternativeName>
        <fullName evidence="1">Queuosine biosynthesis protein QueC</fullName>
    </alternativeName>
</protein>
<comment type="function">
    <text evidence="1">Catalyzes the ATP-dependent conversion of 7-carboxy-7-deazaguanine (CDG) to 7-cyano-7-deazaguanine (preQ(0)).</text>
</comment>
<comment type="catalytic activity">
    <reaction evidence="1">
        <text>7-carboxy-7-deazaguanine + NH4(+) + ATP = 7-cyano-7-deazaguanine + ADP + phosphate + H2O + H(+)</text>
        <dbReference type="Rhea" id="RHEA:27982"/>
        <dbReference type="ChEBI" id="CHEBI:15377"/>
        <dbReference type="ChEBI" id="CHEBI:15378"/>
        <dbReference type="ChEBI" id="CHEBI:28938"/>
        <dbReference type="ChEBI" id="CHEBI:30616"/>
        <dbReference type="ChEBI" id="CHEBI:43474"/>
        <dbReference type="ChEBI" id="CHEBI:45075"/>
        <dbReference type="ChEBI" id="CHEBI:61036"/>
        <dbReference type="ChEBI" id="CHEBI:456216"/>
        <dbReference type="EC" id="6.3.4.20"/>
    </reaction>
</comment>
<comment type="cofactor">
    <cofactor evidence="1">
        <name>Zn(2+)</name>
        <dbReference type="ChEBI" id="CHEBI:29105"/>
    </cofactor>
    <text evidence="1">Binds 1 zinc ion per subunit.</text>
</comment>
<comment type="pathway">
    <text evidence="1">Purine metabolism; 7-cyano-7-deazaguanine biosynthesis.</text>
</comment>
<comment type="similarity">
    <text evidence="1">Belongs to the QueC family.</text>
</comment>
<gene>
    <name evidence="1" type="primary">queC</name>
    <name type="ordered locus">SeD_A0497</name>
</gene>
<keyword id="KW-0067">ATP-binding</keyword>
<keyword id="KW-0436">Ligase</keyword>
<keyword id="KW-0479">Metal-binding</keyword>
<keyword id="KW-0547">Nucleotide-binding</keyword>
<keyword id="KW-0671">Queuosine biosynthesis</keyword>
<keyword id="KW-0862">Zinc</keyword>
<accession>B5FKW0</accession>
<dbReference type="EC" id="6.3.4.20" evidence="1"/>
<dbReference type="EMBL" id="CP001144">
    <property type="protein sequence ID" value="ACH75258.1"/>
    <property type="molecule type" value="Genomic_DNA"/>
</dbReference>
<dbReference type="RefSeq" id="WP_000817201.1">
    <property type="nucleotide sequence ID" value="NC_011205.1"/>
</dbReference>
<dbReference type="SMR" id="B5FKW0"/>
<dbReference type="KEGG" id="sed:SeD_A0497"/>
<dbReference type="HOGENOM" id="CLU_081854_0_0_6"/>
<dbReference type="UniPathway" id="UPA00391"/>
<dbReference type="Proteomes" id="UP000008322">
    <property type="component" value="Chromosome"/>
</dbReference>
<dbReference type="GO" id="GO:0005524">
    <property type="term" value="F:ATP binding"/>
    <property type="evidence" value="ECO:0007669"/>
    <property type="project" value="UniProtKB-UniRule"/>
</dbReference>
<dbReference type="GO" id="GO:0016879">
    <property type="term" value="F:ligase activity, forming carbon-nitrogen bonds"/>
    <property type="evidence" value="ECO:0007669"/>
    <property type="project" value="UniProtKB-UniRule"/>
</dbReference>
<dbReference type="GO" id="GO:0008270">
    <property type="term" value="F:zinc ion binding"/>
    <property type="evidence" value="ECO:0007669"/>
    <property type="project" value="UniProtKB-UniRule"/>
</dbReference>
<dbReference type="GO" id="GO:0008616">
    <property type="term" value="P:queuosine biosynthetic process"/>
    <property type="evidence" value="ECO:0007669"/>
    <property type="project" value="UniProtKB-UniRule"/>
</dbReference>
<dbReference type="CDD" id="cd01995">
    <property type="entry name" value="QueC-like"/>
    <property type="match status" value="1"/>
</dbReference>
<dbReference type="FunFam" id="3.40.50.620:FF:000017">
    <property type="entry name" value="7-cyano-7-deazaguanine synthase"/>
    <property type="match status" value="1"/>
</dbReference>
<dbReference type="Gene3D" id="3.40.50.620">
    <property type="entry name" value="HUPs"/>
    <property type="match status" value="1"/>
</dbReference>
<dbReference type="HAMAP" id="MF_01633">
    <property type="entry name" value="QueC"/>
    <property type="match status" value="1"/>
</dbReference>
<dbReference type="InterPro" id="IPR018317">
    <property type="entry name" value="QueC"/>
</dbReference>
<dbReference type="InterPro" id="IPR014729">
    <property type="entry name" value="Rossmann-like_a/b/a_fold"/>
</dbReference>
<dbReference type="NCBIfam" id="TIGR00364">
    <property type="entry name" value="7-cyano-7-deazaguanine synthase QueC"/>
    <property type="match status" value="1"/>
</dbReference>
<dbReference type="NCBIfam" id="NF008317">
    <property type="entry name" value="PRK11106.1"/>
    <property type="match status" value="1"/>
</dbReference>
<dbReference type="PANTHER" id="PTHR42914">
    <property type="entry name" value="7-CYANO-7-DEAZAGUANINE SYNTHASE"/>
    <property type="match status" value="1"/>
</dbReference>
<dbReference type="PANTHER" id="PTHR42914:SF1">
    <property type="entry name" value="7-CYANO-7-DEAZAGUANINE SYNTHASE"/>
    <property type="match status" value="1"/>
</dbReference>
<dbReference type="Pfam" id="PF06508">
    <property type="entry name" value="QueC"/>
    <property type="match status" value="1"/>
</dbReference>
<dbReference type="PIRSF" id="PIRSF006293">
    <property type="entry name" value="ExsB"/>
    <property type="match status" value="1"/>
</dbReference>
<dbReference type="SUPFAM" id="SSF52402">
    <property type="entry name" value="Adenine nucleotide alpha hydrolases-like"/>
    <property type="match status" value="1"/>
</dbReference>